<evidence type="ECO:0000250" key="1">
    <source>
        <dbReference type="UniProtKB" id="P45779"/>
    </source>
</evidence>
<evidence type="ECO:0000255" key="2"/>
<evidence type="ECO:0000256" key="3">
    <source>
        <dbReference type="SAM" id="MobiDB-lite"/>
    </source>
</evidence>
<evidence type="ECO:0000269" key="4">
    <source>
    </source>
</evidence>
<evidence type="ECO:0000269" key="5">
    <source>
    </source>
</evidence>
<evidence type="ECO:0000303" key="6">
    <source>
    </source>
</evidence>
<evidence type="ECO:0000303" key="7">
    <source>
    </source>
</evidence>
<evidence type="ECO:0000305" key="8"/>
<evidence type="ECO:0000305" key="9">
    <source>
    </source>
</evidence>
<evidence type="ECO:0000305" key="10">
    <source>
    </source>
</evidence>
<evidence type="ECO:0000305" key="11">
    <source>
    </source>
</evidence>
<evidence type="ECO:0000305" key="12">
    <source>
    </source>
</evidence>
<evidence type="ECO:0007744" key="13">
    <source>
        <dbReference type="PDB" id="4E9J"/>
    </source>
</evidence>
<evidence type="ECO:0007744" key="14">
    <source>
        <dbReference type="PDB" id="4EC5"/>
    </source>
</evidence>
<evidence type="ECO:0007744" key="15">
    <source>
        <dbReference type="PDB" id="5MP2"/>
    </source>
</evidence>
<evidence type="ECO:0007744" key="16">
    <source>
        <dbReference type="PDB" id="5NGI"/>
    </source>
</evidence>
<evidence type="ECO:0007744" key="17">
    <source>
        <dbReference type="PDB" id="5WLN"/>
    </source>
</evidence>
<evidence type="ECO:0007829" key="18">
    <source>
        <dbReference type="PDB" id="4E9J"/>
    </source>
</evidence>
<evidence type="ECO:0007829" key="19">
    <source>
        <dbReference type="PDB" id="4EC5"/>
    </source>
</evidence>
<evidence type="ECO:0007829" key="20">
    <source>
        <dbReference type="PDB" id="5MP2"/>
    </source>
</evidence>
<reference key="1">
    <citation type="journal article" date="1993" name="Mol. Microbiol.">
        <title>Xcp-mediated protein secretion in Pseudomonas aeruginosa: identification of two additional genes and evidence for regulation of xcp gene expression.</title>
        <authorList>
            <person name="Akrim M."/>
            <person name="Bally M."/>
            <person name="Ball G."/>
            <person name="Tommassen J."/>
            <person name="Teerink H."/>
            <person name="Filloux A."/>
            <person name="Lazdunski A."/>
        </authorList>
    </citation>
    <scope>NUCLEOTIDE SEQUENCE [GENOMIC DNA]</scope>
    <source>
        <strain>ATCC 15692 / DSM 22644 / CIP 104116 / JCM 14847 / LMG 12228 / 1C / PRS 101 / PAO1</strain>
    </source>
</reference>
<reference key="2">
    <citation type="journal article" date="2000" name="Nature">
        <title>Complete genome sequence of Pseudomonas aeruginosa PAO1, an opportunistic pathogen.</title>
        <authorList>
            <person name="Stover C.K."/>
            <person name="Pham X.-Q.T."/>
            <person name="Erwin A.L."/>
            <person name="Mizoguchi S.D."/>
            <person name="Warrener P."/>
            <person name="Hickey M.J."/>
            <person name="Brinkman F.S.L."/>
            <person name="Hufnagle W.O."/>
            <person name="Kowalik D.J."/>
            <person name="Lagrou M."/>
            <person name="Garber R.L."/>
            <person name="Goltry L."/>
            <person name="Tolentino E."/>
            <person name="Westbrock-Wadman S."/>
            <person name="Yuan Y."/>
            <person name="Brody L.L."/>
            <person name="Coulter S.N."/>
            <person name="Folger K.R."/>
            <person name="Kas A."/>
            <person name="Larbig K."/>
            <person name="Lim R.M."/>
            <person name="Smith K.A."/>
            <person name="Spencer D.H."/>
            <person name="Wong G.K.-S."/>
            <person name="Wu Z."/>
            <person name="Paulsen I.T."/>
            <person name="Reizer J."/>
            <person name="Saier M.H. Jr."/>
            <person name="Hancock R.E.W."/>
            <person name="Lory S."/>
            <person name="Olson M.V."/>
        </authorList>
    </citation>
    <scope>NUCLEOTIDE SEQUENCE [LARGE SCALE GENOMIC DNA]</scope>
    <source>
        <strain>ATCC 15692 / DSM 22644 / CIP 104116 / JCM 14847 / LMG 12228 / 1C / PRS 101 / PAO1</strain>
    </source>
</reference>
<reference evidence="13 14" key="3">
    <citation type="journal article" date="2013" name="J. Biol. Chem.">
        <title>New insights into the assembly of bacterial secretins: structural studies of the periplasmic domain of XcpQ from Pseudomonas aeruginosa.</title>
        <authorList>
            <person name="Van der Meeren R."/>
            <person name="Wen Y."/>
            <person name="Van Gelder P."/>
            <person name="Tommassen J."/>
            <person name="Devreese B."/>
            <person name="Savvides S.N."/>
        </authorList>
    </citation>
    <scope>X-RAY CRYSTALLOGRAPHY (2.03 ANGSTROMS) OF 35-277</scope>
    <scope>FUNCTION</scope>
    <source>
        <strain>ATCC 15692 / DSM 22644 / CIP 104116 / JCM 14847 / LMG 12228 / 1C / PRS 101 / PAO1</strain>
    </source>
</reference>
<reference evidence="17" key="4">
    <citation type="journal article" date="2017" name="MBio">
        <title>Structural basis of type 2 secretion system engagement between the inner and outer bacterial membranes.</title>
        <authorList>
            <person name="Hay I.D."/>
            <person name="Belousoff M.J."/>
            <person name="Lithgow T."/>
        </authorList>
    </citation>
    <scope>STRUCTURE BY ELECTRON MICROSCOPY (3.57 ANGSTROMS) OF 35-658</scope>
    <scope>SUBUNIT</scope>
    <scope>SUBCELLULAR LOCATION</scope>
    <source>
        <strain>ATCC 15692 / DSM 22644 / CIP 104116 / JCM 14847 / LMG 12228 / 1C / PRS 101 / PAO1</strain>
    </source>
</reference>
<reference evidence="15 16" key="5">
    <citation type="journal article" date="2017" name="MBio">
        <title>Unraveling the self-assembly of the Pseudomonas aeruginosa XcpQ secretin periplasmic domain provides new molecular insights into type II secretion system secreton architecture and dynamics.</title>
        <authorList>
            <person name="Douzi B."/>
            <person name="Trinh N.T.T."/>
            <person name="Michel-Souzy S."/>
            <person name="Desmyter A."/>
            <person name="Ball G."/>
            <person name="Barbier P."/>
            <person name="Kosta A."/>
            <person name="Durand E."/>
            <person name="Forest K.T."/>
            <person name="Cambillau C."/>
            <person name="Roussel A."/>
            <person name="Voulhoux R."/>
        </authorList>
    </citation>
    <scope>X-RAY CRYSTALLOGRAPHY (2.90 ANGSTROMS) OF 35-274</scope>
    <scope>FUNCTION</scope>
    <scope>DOMAIN</scope>
    <scope>DISRUPTION PHENOTYPE</scope>
</reference>
<keyword id="KW-0002">3D-structure</keyword>
<keyword id="KW-0998">Cell outer membrane</keyword>
<keyword id="KW-0472">Membrane</keyword>
<keyword id="KW-0653">Protein transport</keyword>
<keyword id="KW-1185">Reference proteome</keyword>
<keyword id="KW-0732">Signal</keyword>
<keyword id="KW-0812">Transmembrane</keyword>
<keyword id="KW-1134">Transmembrane beta strand</keyword>
<keyword id="KW-0813">Transport</keyword>
<organism>
    <name type="scientific">Pseudomonas aeruginosa (strain ATCC 15692 / DSM 22644 / CIP 104116 / JCM 14847 / LMG 12228 / 1C / PRS 101 / PAO1)</name>
    <dbReference type="NCBI Taxonomy" id="208964"/>
    <lineage>
        <taxon>Bacteria</taxon>
        <taxon>Pseudomonadati</taxon>
        <taxon>Pseudomonadota</taxon>
        <taxon>Gammaproteobacteria</taxon>
        <taxon>Pseudomonadales</taxon>
        <taxon>Pseudomonadaceae</taxon>
        <taxon>Pseudomonas</taxon>
    </lineage>
</organism>
<sequence length="658" mass="69953">MSQPLLRALFAPSSRSYVPAVLLSLALGIQAAHAENSGGNAFVPAGNQQEAHWTINLKDADIREFIDQISEITGETFVVDPRVKGQVSVVSKAQLSLSEVYQLFLSVMSTHGFTVVAQGDQARIVPNAEAKTEAGGGQSAPDRLETRVIQVQQSPVSELIPLIRPLVPQYGHLAAVPSANALIISDRSANIARIEDVIRQLDQKGSHDYSVINLRYGWVMDAAEVLNNAMSRGQAKGAAGAQVIADARTNRLIILGPPQARAKLVQLAQSLDTPTARSANTRVIRLRHNDAKTLAETLGQISEGMKNNGGQGGEQTGGGRPSNILIRADESTNALVLLADPDTVNALEDIVRQLDVPRAQVLVEAAIVEISGDIQDAVGVQWAINKGGMGGTKTNFANTGLSIGTLLQSLESNKAPESIPDGAIVGIGSSSFGALVTALSANTKSNLLSTPSLLTLDNQKAEILVGQNVPFQTGSYTTNSEGSSNPFTTVERKDIGVSLKVTPHINDGAALRLEIEQEISALLPNAQQRNNTDLITSKRSIKSTILAENGQVIVIGGLIQDDVSQAESKVPLLGDIPLLGRLFRSTKDTHTKRNLMVFLRPTVVRDSAGLAALSGKKYSDIRVIDGTRGPEGRPSILPTNANQLFDGQAVDLRELMTE</sequence>
<feature type="signal peptide" evidence="2">
    <location>
        <begin position="1"/>
        <end position="34"/>
    </location>
</feature>
<feature type="chain" id="PRO_0000013104" description="Secretin XcpQ">
    <location>
        <begin position="35"/>
        <end position="658"/>
    </location>
</feature>
<feature type="region of interest" description="N0" evidence="11">
    <location>
        <begin position="51"/>
        <end position="141"/>
    </location>
</feature>
<feature type="region of interest" description="N1" evidence="11">
    <location>
        <begin position="142"/>
        <end position="205"/>
    </location>
</feature>
<feature type="region of interest" description="N2" evidence="11">
    <location>
        <begin position="206"/>
        <end position="279"/>
    </location>
</feature>
<feature type="region of interest" description="N3" evidence="11">
    <location>
        <begin position="280"/>
        <end position="365"/>
    </location>
</feature>
<feature type="region of interest" description="Disordered" evidence="3">
    <location>
        <begin position="302"/>
        <end position="322"/>
    </location>
</feature>
<feature type="region of interest" description="Secretin" evidence="11">
    <location>
        <begin position="368"/>
        <end position="606"/>
    </location>
</feature>
<feature type="region of interest" description="S domain" evidence="11">
    <location>
        <begin position="608"/>
        <end position="658"/>
    </location>
</feature>
<feature type="compositionally biased region" description="Gly residues" evidence="3">
    <location>
        <begin position="307"/>
        <end position="320"/>
    </location>
</feature>
<feature type="site" description="May serve as a pivot that allows opening of the central gate for substrate egress" evidence="1">
    <location>
        <position position="466"/>
    </location>
</feature>
<feature type="strand" evidence="18">
    <location>
        <begin position="42"/>
        <end position="44"/>
    </location>
</feature>
<feature type="strand" evidence="18">
    <location>
        <begin position="52"/>
        <end position="61"/>
    </location>
</feature>
<feature type="helix" evidence="18">
    <location>
        <begin position="62"/>
        <end position="73"/>
    </location>
</feature>
<feature type="strand" evidence="18">
    <location>
        <begin position="77"/>
        <end position="79"/>
    </location>
</feature>
<feature type="strand" evidence="18">
    <location>
        <begin position="86"/>
        <end position="96"/>
    </location>
</feature>
<feature type="helix" evidence="18">
    <location>
        <begin position="97"/>
        <end position="110"/>
    </location>
</feature>
<feature type="strand" evidence="18">
    <location>
        <begin position="113"/>
        <end position="117"/>
    </location>
</feature>
<feature type="strand" evidence="18">
    <location>
        <begin position="119"/>
        <end position="126"/>
    </location>
</feature>
<feature type="strand" evidence="18">
    <location>
        <begin position="145"/>
        <end position="150"/>
    </location>
</feature>
<feature type="strand" evidence="18">
    <location>
        <begin position="152"/>
        <end position="154"/>
    </location>
</feature>
<feature type="helix" evidence="18">
    <location>
        <begin position="156"/>
        <end position="163"/>
    </location>
</feature>
<feature type="helix" evidence="18">
    <location>
        <begin position="164"/>
        <end position="166"/>
    </location>
</feature>
<feature type="strand" evidence="18">
    <location>
        <begin position="171"/>
        <end position="176"/>
    </location>
</feature>
<feature type="helix" evidence="18">
    <location>
        <begin position="177"/>
        <end position="179"/>
    </location>
</feature>
<feature type="strand" evidence="18">
    <location>
        <begin position="181"/>
        <end position="186"/>
    </location>
</feature>
<feature type="helix" evidence="18">
    <location>
        <begin position="188"/>
        <end position="202"/>
    </location>
</feature>
<feature type="strand" evidence="20">
    <location>
        <begin position="203"/>
        <end position="205"/>
    </location>
</feature>
<feature type="strand" evidence="18">
    <location>
        <begin position="209"/>
        <end position="213"/>
    </location>
</feature>
<feature type="strand" evidence="18">
    <location>
        <begin position="215"/>
        <end position="217"/>
    </location>
</feature>
<feature type="helix" evidence="18">
    <location>
        <begin position="219"/>
        <end position="231"/>
    </location>
</feature>
<feature type="strand" evidence="19">
    <location>
        <begin position="235"/>
        <end position="237"/>
    </location>
</feature>
<feature type="strand" evidence="18">
    <location>
        <begin position="242"/>
        <end position="246"/>
    </location>
</feature>
<feature type="helix" evidence="18">
    <location>
        <begin position="247"/>
        <end position="249"/>
    </location>
</feature>
<feature type="strand" evidence="18">
    <location>
        <begin position="251"/>
        <end position="257"/>
    </location>
</feature>
<feature type="helix" evidence="18">
    <location>
        <begin position="258"/>
        <end position="271"/>
    </location>
</feature>
<protein>
    <recommendedName>
        <fullName evidence="6">Secretin XcpQ</fullName>
    </recommendedName>
    <alternativeName>
        <fullName>General secretion pathway protein D</fullName>
    </alternativeName>
    <alternativeName>
        <fullName>Type II secretion system protein D</fullName>
        <shortName>T2SS protein D</shortName>
    </alternativeName>
</protein>
<proteinExistence type="evidence at protein level"/>
<name>GSPD_PSEAE</name>
<comment type="function">
    <text evidence="1 4 5 9">Involved in a type II secretion system (T2SS, formerly general secretion pathway, GSP) for the export of proteins (Probable). This subunit forms the outer membrane channel (By similarity). Among its substrates are PrpL, elastase LasB, chitin binding protein D (CbpD), aminopeptidase PaAP, and metalloprotease ImpA (PubMed:29042493, PubMed:29042496).</text>
</comment>
<comment type="subunit">
    <text evidence="5">Forms a cylindrical channel with 15 subunits. The closed pentadecameric channel is 170 Angstroms long and 140 Angstroms in diameter.</text>
</comment>
<comment type="interaction">
    <interactant intactId="EBI-16224942">
        <id>P35818</id>
    </interactant>
    <interactant intactId="EBI-16224942">
        <id>P35818</id>
        <label>xcpQ</label>
    </interactant>
    <organismsDiffer>false</organismsDiffer>
    <experiments>2</experiments>
</comment>
<comment type="subcellular location">
    <subcellularLocation>
        <location evidence="12">Cell outer membrane</location>
    </subcellularLocation>
    <text evidence="10 11 12">Most of the protein is in the periplasm which it traverses to contact proteins of the cell inner membrane.</text>
</comment>
<comment type="domain">
    <text evidence="4 5 11 12">The N0, N1, N2 and N3 domains are periplasmic, while the secretin and S domains form a channel that is partially inserted in the outer membrane. The N1, N2 and N3 domains each form a periplasmic ring; the N0 domain was present but not resolved by electron microscopy. The secretin domain forms a double beta-barrel structure; the outer barrel has a diameter of about 140 Angstroms while the inner barrel forms the central gate with a small pore in the closed state (PubMed:29042496). Isolated N-terminus (domains N0, N1 and N2) assembles as a hexamer of dimers (i.e. dodecamers). The N0 domain probably moves during export (PubMed:29042493). It has been suggested that the C15 symmetry of the C-terminus may transit to a C6 symmetry by displacement of 3 of the N-terminii (Probable).</text>
</comment>
<comment type="disruption phenotype">
    <text evidence="4">Loss of export of PrpL, elastase LasB, chitin binding protein D (CbpD), aminopeptidase PaAP, and metalloprotease ImpA, still exports LapA and AprA.</text>
</comment>
<comment type="similarity">
    <text evidence="8">Belongs to the bacterial secretin family. GSP D subfamily.</text>
</comment>
<gene>
    <name evidence="7" type="primary">xcpQ</name>
    <name type="ordered locus">PA3105</name>
</gene>
<dbReference type="EMBL" id="X68594">
    <property type="protein sequence ID" value="CAA48582.1"/>
    <property type="molecule type" value="Genomic_DNA"/>
</dbReference>
<dbReference type="EMBL" id="AE004091">
    <property type="protein sequence ID" value="AAG06493.1"/>
    <property type="molecule type" value="Genomic_DNA"/>
</dbReference>
<dbReference type="PIR" id="S39653">
    <property type="entry name" value="S39653"/>
</dbReference>
<dbReference type="RefSeq" id="NP_251795.1">
    <property type="nucleotide sequence ID" value="NC_002516.2"/>
</dbReference>
<dbReference type="RefSeq" id="WP_003113934.1">
    <property type="nucleotide sequence ID" value="NZ_QZGE01000009.1"/>
</dbReference>
<dbReference type="PDB" id="4E9J">
    <property type="method" value="X-ray"/>
    <property type="resolution" value="2.03 A"/>
    <property type="chains" value="A/B=35-277"/>
</dbReference>
<dbReference type="PDB" id="4EC5">
    <property type="method" value="X-ray"/>
    <property type="resolution" value="2.20 A"/>
    <property type="chains" value="A/B=35-277"/>
</dbReference>
<dbReference type="PDB" id="5MP2">
    <property type="method" value="X-ray"/>
    <property type="resolution" value="2.90 A"/>
    <property type="chains" value="A/B=35-274"/>
</dbReference>
<dbReference type="PDB" id="5NGI">
    <property type="method" value="X-ray"/>
    <property type="resolution" value="2.98 A"/>
    <property type="chains" value="A/B=35-275"/>
</dbReference>
<dbReference type="PDB" id="5WLN">
    <property type="method" value="EM"/>
    <property type="resolution" value="3.57 A"/>
    <property type="chains" value="A/B/C/D/E/F/G/H/I/J/K/L/M/N/O=35-658"/>
</dbReference>
<dbReference type="PDBsum" id="4E9J"/>
<dbReference type="PDBsum" id="4EC5"/>
<dbReference type="PDBsum" id="5MP2"/>
<dbReference type="PDBsum" id="5NGI"/>
<dbReference type="PDBsum" id="5WLN"/>
<dbReference type="EMDB" id="EMD-8860"/>
<dbReference type="SMR" id="P35818"/>
<dbReference type="DIP" id="DIP-60809N"/>
<dbReference type="FunCoup" id="P35818">
    <property type="interactions" value="134"/>
</dbReference>
<dbReference type="STRING" id="208964.PA3105"/>
<dbReference type="TCDB" id="1.B.22.1.2">
    <property type="family name" value="the outer bacterial membrane secretin (secretin) family"/>
</dbReference>
<dbReference type="PaxDb" id="208964-PA3105"/>
<dbReference type="ABCD" id="P35818">
    <property type="antibodies" value="1 sequenced antibody"/>
</dbReference>
<dbReference type="GeneID" id="880114"/>
<dbReference type="KEGG" id="pae:PA3105"/>
<dbReference type="PATRIC" id="fig|208964.12.peg.3257"/>
<dbReference type="PseudoCAP" id="PA3105"/>
<dbReference type="HOGENOM" id="CLU_006756_1_1_6"/>
<dbReference type="InParanoid" id="P35818"/>
<dbReference type="OrthoDB" id="9775455at2"/>
<dbReference type="PhylomeDB" id="P35818"/>
<dbReference type="BioCyc" id="PAER208964:G1FZ6-3161-MONOMER"/>
<dbReference type="EvolutionaryTrace" id="P35818"/>
<dbReference type="Proteomes" id="UP000002438">
    <property type="component" value="Chromosome"/>
</dbReference>
<dbReference type="GO" id="GO:0009279">
    <property type="term" value="C:cell outer membrane"/>
    <property type="evidence" value="ECO:0007669"/>
    <property type="project" value="UniProtKB-SubCell"/>
</dbReference>
<dbReference type="GO" id="GO:0015627">
    <property type="term" value="C:type II protein secretion system complex"/>
    <property type="evidence" value="ECO:0000314"/>
    <property type="project" value="PseudoCAP"/>
</dbReference>
<dbReference type="GO" id="GO:0042802">
    <property type="term" value="F:identical protein binding"/>
    <property type="evidence" value="ECO:0000353"/>
    <property type="project" value="IntAct"/>
</dbReference>
<dbReference type="GO" id="GO:0009306">
    <property type="term" value="P:protein secretion"/>
    <property type="evidence" value="ECO:0000318"/>
    <property type="project" value="GO_Central"/>
</dbReference>
<dbReference type="GO" id="GO:0015628">
    <property type="term" value="P:protein secretion by the type II secretion system"/>
    <property type="evidence" value="ECO:0000314"/>
    <property type="project" value="PseudoCAP"/>
</dbReference>
<dbReference type="FunFam" id="3.30.1370.120:FF:000011">
    <property type="entry name" value="Type II secretion system protein"/>
    <property type="match status" value="1"/>
</dbReference>
<dbReference type="Gene3D" id="3.30.1370.120">
    <property type="match status" value="3"/>
</dbReference>
<dbReference type="InterPro" id="IPR050810">
    <property type="entry name" value="Bact_Secretion_Sys_Channel"/>
</dbReference>
<dbReference type="InterPro" id="IPR049371">
    <property type="entry name" value="GspD-like_N0"/>
</dbReference>
<dbReference type="InterPro" id="IPR001775">
    <property type="entry name" value="GspD/PilQ"/>
</dbReference>
<dbReference type="InterPro" id="IPR005644">
    <property type="entry name" value="NolW-like"/>
</dbReference>
<dbReference type="InterPro" id="IPR038591">
    <property type="entry name" value="NolW-like_sf"/>
</dbReference>
<dbReference type="InterPro" id="IPR004846">
    <property type="entry name" value="T2SS/T3SS_dom"/>
</dbReference>
<dbReference type="InterPro" id="IPR013356">
    <property type="entry name" value="T2SS_GspD"/>
</dbReference>
<dbReference type="InterPro" id="IPR004845">
    <property type="entry name" value="T2SS_GspD_CS"/>
</dbReference>
<dbReference type="NCBIfam" id="TIGR02517">
    <property type="entry name" value="type_II_gspD"/>
    <property type="match status" value="1"/>
</dbReference>
<dbReference type="PANTHER" id="PTHR30332">
    <property type="entry name" value="PROBABLE GENERAL SECRETION PATHWAY PROTEIN D"/>
    <property type="match status" value="1"/>
</dbReference>
<dbReference type="PANTHER" id="PTHR30332:SF24">
    <property type="entry name" value="SECRETIN GSPD-RELATED"/>
    <property type="match status" value="1"/>
</dbReference>
<dbReference type="Pfam" id="PF00263">
    <property type="entry name" value="Secretin"/>
    <property type="match status" value="1"/>
</dbReference>
<dbReference type="Pfam" id="PF03958">
    <property type="entry name" value="Secretin_N"/>
    <property type="match status" value="3"/>
</dbReference>
<dbReference type="Pfam" id="PF21305">
    <property type="entry name" value="type_II_gspD_N0"/>
    <property type="match status" value="1"/>
</dbReference>
<dbReference type="PRINTS" id="PR00811">
    <property type="entry name" value="BCTERIALGSPD"/>
</dbReference>
<dbReference type="PROSITE" id="PS00875">
    <property type="entry name" value="T2SP_D"/>
    <property type="match status" value="1"/>
</dbReference>
<accession>P35818</accession>
<accession>Q9HZB2</accession>